<proteinExistence type="inferred from homology"/>
<feature type="chain" id="PRO_1000195016" description="Ribosomal RNA large subunit methyltransferase E">
    <location>
        <begin position="1"/>
        <end position="208"/>
    </location>
</feature>
<feature type="active site" description="Proton acceptor" evidence="1">
    <location>
        <position position="164"/>
    </location>
</feature>
<feature type="binding site" evidence="1">
    <location>
        <position position="63"/>
    </location>
    <ligand>
        <name>S-adenosyl-L-methionine</name>
        <dbReference type="ChEBI" id="CHEBI:59789"/>
    </ligand>
</feature>
<feature type="binding site" evidence="1">
    <location>
        <position position="65"/>
    </location>
    <ligand>
        <name>S-adenosyl-L-methionine</name>
        <dbReference type="ChEBI" id="CHEBI:59789"/>
    </ligand>
</feature>
<feature type="binding site" evidence="1">
    <location>
        <position position="83"/>
    </location>
    <ligand>
        <name>S-adenosyl-L-methionine</name>
        <dbReference type="ChEBI" id="CHEBI:59789"/>
    </ligand>
</feature>
<feature type="binding site" evidence="1">
    <location>
        <position position="99"/>
    </location>
    <ligand>
        <name>S-adenosyl-L-methionine</name>
        <dbReference type="ChEBI" id="CHEBI:59789"/>
    </ligand>
</feature>
<feature type="binding site" evidence="1">
    <location>
        <position position="124"/>
    </location>
    <ligand>
        <name>S-adenosyl-L-methionine</name>
        <dbReference type="ChEBI" id="CHEBI:59789"/>
    </ligand>
</feature>
<accession>B4TJ16</accession>
<evidence type="ECO:0000255" key="1">
    <source>
        <dbReference type="HAMAP-Rule" id="MF_01547"/>
    </source>
</evidence>
<sequence>MTGKKRSASSSRWLQEHFSDKYVQQAQKKGLRSRAWFKLDEIQQSDKLFKPGMTVVDLGAAPGGWSQYVVTQIGGKGRIIACDLLPMDPIVGVDFLQGDFRDELVMKALLERVGDSKVQVVMSDMAPNMSGTPAVDIPRAMYLVELALEMCRDVLAPGGSFVVKVFQGEGFDEYLREIRSLFTKVKVRKPDSSRARSREVYIVATGRK</sequence>
<keyword id="KW-0963">Cytoplasm</keyword>
<keyword id="KW-0489">Methyltransferase</keyword>
<keyword id="KW-0698">rRNA processing</keyword>
<keyword id="KW-0949">S-adenosyl-L-methionine</keyword>
<keyword id="KW-0808">Transferase</keyword>
<organism>
    <name type="scientific">Salmonella heidelberg (strain SL476)</name>
    <dbReference type="NCBI Taxonomy" id="454169"/>
    <lineage>
        <taxon>Bacteria</taxon>
        <taxon>Pseudomonadati</taxon>
        <taxon>Pseudomonadota</taxon>
        <taxon>Gammaproteobacteria</taxon>
        <taxon>Enterobacterales</taxon>
        <taxon>Enterobacteriaceae</taxon>
        <taxon>Salmonella</taxon>
    </lineage>
</organism>
<reference key="1">
    <citation type="journal article" date="2011" name="J. Bacteriol.">
        <title>Comparative genomics of 28 Salmonella enterica isolates: evidence for CRISPR-mediated adaptive sublineage evolution.</title>
        <authorList>
            <person name="Fricke W.F."/>
            <person name="Mammel M.K."/>
            <person name="McDermott P.F."/>
            <person name="Tartera C."/>
            <person name="White D.G."/>
            <person name="Leclerc J.E."/>
            <person name="Ravel J."/>
            <person name="Cebula T.A."/>
        </authorList>
    </citation>
    <scope>NUCLEOTIDE SEQUENCE [LARGE SCALE GENOMIC DNA]</scope>
    <source>
        <strain>SL476</strain>
    </source>
</reference>
<protein>
    <recommendedName>
        <fullName evidence="1">Ribosomal RNA large subunit methyltransferase E</fullName>
        <ecNumber evidence="1">2.1.1.166</ecNumber>
    </recommendedName>
    <alternativeName>
        <fullName evidence="1">23S rRNA Um2552 methyltransferase</fullName>
    </alternativeName>
    <alternativeName>
        <fullName evidence="1">rRNA (uridine-2'-O-)-methyltransferase</fullName>
    </alternativeName>
</protein>
<gene>
    <name evidence="1" type="primary">rlmE</name>
    <name evidence="1" type="synonym">ftsJ</name>
    <name evidence="1" type="synonym">rrmJ</name>
    <name type="ordered locus">SeHA_C3593</name>
</gene>
<comment type="function">
    <text evidence="1">Specifically methylates the uridine in position 2552 of 23S rRNA at the 2'-O position of the ribose in the fully assembled 50S ribosomal subunit.</text>
</comment>
<comment type="catalytic activity">
    <reaction evidence="1">
        <text>uridine(2552) in 23S rRNA + S-adenosyl-L-methionine = 2'-O-methyluridine(2552) in 23S rRNA + S-adenosyl-L-homocysteine + H(+)</text>
        <dbReference type="Rhea" id="RHEA:42720"/>
        <dbReference type="Rhea" id="RHEA-COMP:10202"/>
        <dbReference type="Rhea" id="RHEA-COMP:10203"/>
        <dbReference type="ChEBI" id="CHEBI:15378"/>
        <dbReference type="ChEBI" id="CHEBI:57856"/>
        <dbReference type="ChEBI" id="CHEBI:59789"/>
        <dbReference type="ChEBI" id="CHEBI:65315"/>
        <dbReference type="ChEBI" id="CHEBI:74478"/>
        <dbReference type="EC" id="2.1.1.166"/>
    </reaction>
</comment>
<comment type="subcellular location">
    <subcellularLocation>
        <location evidence="1">Cytoplasm</location>
    </subcellularLocation>
</comment>
<comment type="similarity">
    <text evidence="1">Belongs to the class I-like SAM-binding methyltransferase superfamily. RNA methyltransferase RlmE family.</text>
</comment>
<dbReference type="EC" id="2.1.1.166" evidence="1"/>
<dbReference type="EMBL" id="CP001120">
    <property type="protein sequence ID" value="ACF68625.1"/>
    <property type="molecule type" value="Genomic_DNA"/>
</dbReference>
<dbReference type="RefSeq" id="WP_000145974.1">
    <property type="nucleotide sequence ID" value="NC_011083.1"/>
</dbReference>
<dbReference type="SMR" id="B4TJ16"/>
<dbReference type="KEGG" id="seh:SeHA_C3593"/>
<dbReference type="HOGENOM" id="CLU_009422_4_0_6"/>
<dbReference type="Proteomes" id="UP000001866">
    <property type="component" value="Chromosome"/>
</dbReference>
<dbReference type="GO" id="GO:0005737">
    <property type="term" value="C:cytoplasm"/>
    <property type="evidence" value="ECO:0007669"/>
    <property type="project" value="UniProtKB-SubCell"/>
</dbReference>
<dbReference type="GO" id="GO:0008650">
    <property type="term" value="F:rRNA (uridine-2'-O-)-methyltransferase activity"/>
    <property type="evidence" value="ECO:0007669"/>
    <property type="project" value="UniProtKB-UniRule"/>
</dbReference>
<dbReference type="CDD" id="cd02440">
    <property type="entry name" value="AdoMet_MTases"/>
    <property type="match status" value="1"/>
</dbReference>
<dbReference type="FunFam" id="3.40.50.150:FF:000005">
    <property type="entry name" value="Ribosomal RNA large subunit methyltransferase E"/>
    <property type="match status" value="1"/>
</dbReference>
<dbReference type="Gene3D" id="3.40.50.150">
    <property type="entry name" value="Vaccinia Virus protein VP39"/>
    <property type="match status" value="1"/>
</dbReference>
<dbReference type="HAMAP" id="MF_01547">
    <property type="entry name" value="RNA_methyltr_E"/>
    <property type="match status" value="1"/>
</dbReference>
<dbReference type="InterPro" id="IPR050082">
    <property type="entry name" value="RNA_methyltr_RlmE"/>
</dbReference>
<dbReference type="InterPro" id="IPR002877">
    <property type="entry name" value="RNA_MeTrfase_FtsJ_dom"/>
</dbReference>
<dbReference type="InterPro" id="IPR015507">
    <property type="entry name" value="rRNA-MeTfrase_E"/>
</dbReference>
<dbReference type="InterPro" id="IPR004512">
    <property type="entry name" value="rRNA_MeTrfase_gammaproteobac"/>
</dbReference>
<dbReference type="InterPro" id="IPR029063">
    <property type="entry name" value="SAM-dependent_MTases_sf"/>
</dbReference>
<dbReference type="NCBIfam" id="NF008390">
    <property type="entry name" value="PRK11188.1"/>
    <property type="match status" value="1"/>
</dbReference>
<dbReference type="NCBIfam" id="TIGR00438">
    <property type="entry name" value="rrmJ"/>
    <property type="match status" value="1"/>
</dbReference>
<dbReference type="PANTHER" id="PTHR10920">
    <property type="entry name" value="RIBOSOMAL RNA METHYLTRANSFERASE"/>
    <property type="match status" value="1"/>
</dbReference>
<dbReference type="PANTHER" id="PTHR10920:SF18">
    <property type="entry name" value="RRNA METHYLTRANSFERASE 2, MITOCHONDRIAL"/>
    <property type="match status" value="1"/>
</dbReference>
<dbReference type="Pfam" id="PF01728">
    <property type="entry name" value="FtsJ"/>
    <property type="match status" value="1"/>
</dbReference>
<dbReference type="PIRSF" id="PIRSF005461">
    <property type="entry name" value="23S_rRNA_mtase"/>
    <property type="match status" value="1"/>
</dbReference>
<dbReference type="SUPFAM" id="SSF53335">
    <property type="entry name" value="S-adenosyl-L-methionine-dependent methyltransferases"/>
    <property type="match status" value="1"/>
</dbReference>
<name>RLME_SALHS</name>